<reference key="1">
    <citation type="journal article" date="2005" name="Nature">
        <title>The map-based sequence of the rice genome.</title>
        <authorList>
            <consortium name="International rice genome sequencing project (IRGSP)"/>
        </authorList>
    </citation>
    <scope>NUCLEOTIDE SEQUENCE [LARGE SCALE GENOMIC DNA]</scope>
    <source>
        <strain>cv. Nipponbare</strain>
    </source>
</reference>
<reference key="2">
    <citation type="journal article" date="2008" name="Nucleic Acids Res.">
        <title>The rice annotation project database (RAP-DB): 2008 update.</title>
        <authorList>
            <consortium name="The rice annotation project (RAP)"/>
        </authorList>
    </citation>
    <scope>GENOME REANNOTATION</scope>
    <source>
        <strain>cv. Nipponbare</strain>
    </source>
</reference>
<reference key="3">
    <citation type="journal article" date="2013" name="Rice">
        <title>Improvement of the Oryza sativa Nipponbare reference genome using next generation sequence and optical map data.</title>
        <authorList>
            <person name="Kawahara Y."/>
            <person name="de la Bastide M."/>
            <person name="Hamilton J.P."/>
            <person name="Kanamori H."/>
            <person name="McCombie W.R."/>
            <person name="Ouyang S."/>
            <person name="Schwartz D.C."/>
            <person name="Tanaka T."/>
            <person name="Wu J."/>
            <person name="Zhou S."/>
            <person name="Childs K.L."/>
            <person name="Davidson R.M."/>
            <person name="Lin H."/>
            <person name="Quesada-Ocampo L."/>
            <person name="Vaillancourt B."/>
            <person name="Sakai H."/>
            <person name="Lee S.S."/>
            <person name="Kim J."/>
            <person name="Numa H."/>
            <person name="Itoh T."/>
            <person name="Buell C.R."/>
            <person name="Matsumoto T."/>
        </authorList>
    </citation>
    <scope>GENOME REANNOTATION</scope>
    <source>
        <strain>cv. Nipponbare</strain>
    </source>
</reference>
<reference key="4">
    <citation type="journal article" date="2008" name="Plant Cell">
        <title>A novel class of gibberellin 2-oxidases control semidwarfism, tillering, and root development in rice.</title>
        <authorList>
            <person name="Lo S.F."/>
            <person name="Yang S.Y."/>
            <person name="Chen K.T."/>
            <person name="Hsing Y.I."/>
            <person name="Zeevaart J.A."/>
            <person name="Chen L.J."/>
            <person name="Yu S.M."/>
        </authorList>
    </citation>
    <scope>FUNCTION</scope>
    <scope>CATALYTIC ACTIVITY</scope>
    <scope>COFACTOR</scope>
</reference>
<reference key="5">
    <citation type="journal article" date="2014" name="PLoS ONE">
        <title>OsGA2ox5, a gibberellin metabolism enzyme, is involved in plant growth, the root gravity response and salt stress.</title>
        <authorList>
            <person name="Shan C."/>
            <person name="Mei Z."/>
            <person name="Duan J."/>
            <person name="Chen H."/>
            <person name="Feng H."/>
            <person name="Cai W."/>
        </authorList>
    </citation>
    <scope>FUNCTION</scope>
    <scope>SUBCELLULAR LOCATION</scope>
    <scope>TISSUE SPECIFICITY</scope>
</reference>
<dbReference type="EC" id="1.14.11.13" evidence="7"/>
<dbReference type="EMBL" id="AP005187">
    <property type="protein sequence ID" value="BAC10398.1"/>
    <property type="molecule type" value="Genomic_DNA"/>
</dbReference>
<dbReference type="EMBL" id="AP008213">
    <property type="protein sequence ID" value="BAF20604.1"/>
    <property type="molecule type" value="Genomic_DNA"/>
</dbReference>
<dbReference type="EMBL" id="AP014963">
    <property type="protein sequence ID" value="BAS99697.1"/>
    <property type="molecule type" value="Genomic_DNA"/>
</dbReference>
<dbReference type="RefSeq" id="XP_015645544.1">
    <property type="nucleotide sequence ID" value="XM_015790058.1"/>
</dbReference>
<dbReference type="RefSeq" id="XP_015645545.1">
    <property type="nucleotide sequence ID" value="XM_015790059.1"/>
</dbReference>
<dbReference type="SMR" id="Q8LGZ9"/>
<dbReference type="FunCoup" id="Q8LGZ9">
    <property type="interactions" value="32"/>
</dbReference>
<dbReference type="STRING" id="39947.Q8LGZ9"/>
<dbReference type="PaxDb" id="39947-Q8LGZ9"/>
<dbReference type="EnsemblPlants" id="Os07t0103500-01">
    <property type="protein sequence ID" value="Os07t0103500-01"/>
    <property type="gene ID" value="Os07g0103500"/>
</dbReference>
<dbReference type="Gramene" id="Os07t0103500-01">
    <property type="protein sequence ID" value="Os07t0103500-01"/>
    <property type="gene ID" value="Os07g0103500"/>
</dbReference>
<dbReference type="KEGG" id="dosa:Os07g0103500"/>
<dbReference type="KEGG" id="osa:4342182"/>
<dbReference type="eggNOG" id="KOG0143">
    <property type="taxonomic scope" value="Eukaryota"/>
</dbReference>
<dbReference type="HOGENOM" id="CLU_010119_15_1_1"/>
<dbReference type="InParanoid" id="Q8LGZ9"/>
<dbReference type="OMA" id="PESYRWG"/>
<dbReference type="OrthoDB" id="288590at2759"/>
<dbReference type="PlantReactome" id="R-OSA-1119294">
    <property type="pathway name" value="Gibberellin biosynthesis III (early C-13 hydroxylation)"/>
</dbReference>
<dbReference type="PlantReactome" id="R-OSA-1119377">
    <property type="pathway name" value="Gibberellin biosynthesis II (early C-3 hydroxylation)"/>
</dbReference>
<dbReference type="PlantReactome" id="R-OSA-1119625">
    <property type="pathway name" value="Gibberellin biosynthesis I (non C-3, non C-13 hydroxylation)"/>
</dbReference>
<dbReference type="UniPathway" id="UPA00390"/>
<dbReference type="Proteomes" id="UP000000763">
    <property type="component" value="Chromosome 7"/>
</dbReference>
<dbReference type="Proteomes" id="UP000059680">
    <property type="component" value="Chromosome 7"/>
</dbReference>
<dbReference type="GO" id="GO:0005737">
    <property type="term" value="C:cytoplasm"/>
    <property type="evidence" value="ECO:0000314"/>
    <property type="project" value="UniProtKB"/>
</dbReference>
<dbReference type="GO" id="GO:0005634">
    <property type="term" value="C:nucleus"/>
    <property type="evidence" value="ECO:0000314"/>
    <property type="project" value="UniProtKB"/>
</dbReference>
<dbReference type="GO" id="GO:0045543">
    <property type="term" value="F:gibberellin 2-beta-dioxygenase activity"/>
    <property type="evidence" value="ECO:0000314"/>
    <property type="project" value="UniProtKB"/>
</dbReference>
<dbReference type="GO" id="GO:0046872">
    <property type="term" value="F:metal ion binding"/>
    <property type="evidence" value="ECO:0007669"/>
    <property type="project" value="UniProtKB-KW"/>
</dbReference>
<dbReference type="GO" id="GO:0010336">
    <property type="term" value="P:gibberellic acid homeostasis"/>
    <property type="evidence" value="ECO:0000315"/>
    <property type="project" value="UniProtKB"/>
</dbReference>
<dbReference type="GO" id="GO:0009686">
    <property type="term" value="P:gibberellin biosynthetic process"/>
    <property type="evidence" value="ECO:0007669"/>
    <property type="project" value="UniProtKB-UniPathway"/>
</dbReference>
<dbReference type="GO" id="GO:0045487">
    <property type="term" value="P:gibberellin catabolic process"/>
    <property type="evidence" value="ECO:0000315"/>
    <property type="project" value="UniProtKB"/>
</dbReference>
<dbReference type="FunFam" id="2.60.120.330:FF:000050">
    <property type="entry name" value="Gibberellin 2-beta-dioxygenase 7"/>
    <property type="match status" value="1"/>
</dbReference>
<dbReference type="Gene3D" id="2.60.120.330">
    <property type="entry name" value="B-lactam Antibiotic, Isopenicillin N Synthase, Chain"/>
    <property type="match status" value="1"/>
</dbReference>
<dbReference type="InterPro" id="IPR026992">
    <property type="entry name" value="DIOX_N"/>
</dbReference>
<dbReference type="InterPro" id="IPR044861">
    <property type="entry name" value="IPNS-like_FE2OG_OXY"/>
</dbReference>
<dbReference type="InterPro" id="IPR027443">
    <property type="entry name" value="IPNS-like_sf"/>
</dbReference>
<dbReference type="InterPro" id="IPR050231">
    <property type="entry name" value="Iron_ascorbate_oxido_reductase"/>
</dbReference>
<dbReference type="InterPro" id="IPR005123">
    <property type="entry name" value="Oxoglu/Fe-dep_dioxygenase_dom"/>
</dbReference>
<dbReference type="PANTHER" id="PTHR47990">
    <property type="entry name" value="2-OXOGLUTARATE (2OG) AND FE(II)-DEPENDENT OXYGENASE SUPERFAMILY PROTEIN-RELATED"/>
    <property type="match status" value="1"/>
</dbReference>
<dbReference type="Pfam" id="PF03171">
    <property type="entry name" value="2OG-FeII_Oxy"/>
    <property type="match status" value="1"/>
</dbReference>
<dbReference type="Pfam" id="PF14226">
    <property type="entry name" value="DIOX_N"/>
    <property type="match status" value="1"/>
</dbReference>
<dbReference type="SUPFAM" id="SSF51197">
    <property type="entry name" value="Clavaminate synthase-like"/>
    <property type="match status" value="1"/>
</dbReference>
<dbReference type="PROSITE" id="PS51471">
    <property type="entry name" value="FE2OG_OXY"/>
    <property type="match status" value="1"/>
</dbReference>
<comment type="function">
    <text evidence="3 4">Catalyzes the 2-beta-hydroxylation of several biologically active gibberellins (GAs), leading to the homeostatic regulation of their endogenous level (PubMed:18952778, PubMed:24475234). Catabolism of GAs plays a central role in plant development (PubMed:18952778, PubMed:24475234). In vitro, converts GA12 and GA53 to the corresponding 2-beta-hydroxylated products GA110 and GA97, respectively (PubMed:18952778).</text>
</comment>
<comment type="catalytic activity">
    <reaction evidence="3">
        <text>gibberellin A1 + 2-oxoglutarate + O2 = gibberellin A8 + succinate + CO2</text>
        <dbReference type="Rhea" id="RHEA:15005"/>
        <dbReference type="ChEBI" id="CHEBI:15379"/>
        <dbReference type="ChEBI" id="CHEBI:16526"/>
        <dbReference type="ChEBI" id="CHEBI:16810"/>
        <dbReference type="ChEBI" id="CHEBI:30031"/>
        <dbReference type="ChEBI" id="CHEBI:58524"/>
        <dbReference type="ChEBI" id="CHEBI:58594"/>
        <dbReference type="EC" id="1.14.11.13"/>
    </reaction>
</comment>
<comment type="cofactor">
    <cofactor evidence="3">
        <name>L-ascorbate</name>
        <dbReference type="ChEBI" id="CHEBI:38290"/>
    </cofactor>
</comment>
<comment type="cofactor">
    <cofactor evidence="2">
        <name>Fe(2+)</name>
        <dbReference type="ChEBI" id="CHEBI:29033"/>
    </cofactor>
    <text evidence="2">Binds 1 Fe(2+) ion per subunit.</text>
</comment>
<comment type="pathway">
    <text evidence="6">Plant hormone biosynthesis; gibberellin biosynthesis.</text>
</comment>
<comment type="subcellular location">
    <subcellularLocation>
        <location evidence="4">Cytoplasm</location>
    </subcellularLocation>
    <subcellularLocation>
        <location evidence="4">Nucleus</location>
    </subcellularLocation>
</comment>
<comment type="tissue specificity">
    <text evidence="4">Expressed in roots, leaves, culms, leaf sheaths and young panicles.</text>
</comment>
<comment type="miscellaneous">
    <text evidence="3 4">Plant overexpressing GA2OX5 exhibit an extremely dwarf phenotype.</text>
</comment>
<comment type="similarity">
    <text evidence="6">Belongs to the iron/ascorbate-dependent oxidoreductase family. GA2OX subfamily.</text>
</comment>
<name>G2OX5_ORYSJ</name>
<accession>Q8LGZ9</accession>
<protein>
    <recommendedName>
        <fullName evidence="6">Gibberellin 2-beta-dioxygenase 5</fullName>
        <ecNumber evidence="7">1.14.11.13</ecNumber>
    </recommendedName>
    <alternativeName>
        <fullName evidence="6">Gibberellin 2-beta-hydroxylase 5</fullName>
    </alternativeName>
    <alternativeName>
        <fullName evidence="5">Gibberellin 2-oxidase 5</fullName>
        <shortName evidence="5">GA 2-oxidase 5</shortName>
        <shortName evidence="5">OsGA2ox5</shortName>
    </alternativeName>
</protein>
<proteinExistence type="evidence at protein level"/>
<evidence type="ECO:0000250" key="1">
    <source>
        <dbReference type="UniProtKB" id="D4N500"/>
    </source>
</evidence>
<evidence type="ECO:0000255" key="2">
    <source>
        <dbReference type="PROSITE-ProRule" id="PRU00805"/>
    </source>
</evidence>
<evidence type="ECO:0000269" key="3">
    <source>
    </source>
</evidence>
<evidence type="ECO:0000269" key="4">
    <source>
    </source>
</evidence>
<evidence type="ECO:0000303" key="5">
    <source>
    </source>
</evidence>
<evidence type="ECO:0000305" key="6"/>
<evidence type="ECO:0000305" key="7">
    <source>
    </source>
</evidence>
<evidence type="ECO:0000312" key="8">
    <source>
        <dbReference type="EMBL" id="BAC10398.1"/>
    </source>
</evidence>
<evidence type="ECO:0000312" key="9">
    <source>
        <dbReference type="EMBL" id="BAF20604.1"/>
    </source>
</evidence>
<organism>
    <name type="scientific">Oryza sativa subsp. japonica</name>
    <name type="common">Rice</name>
    <dbReference type="NCBI Taxonomy" id="39947"/>
    <lineage>
        <taxon>Eukaryota</taxon>
        <taxon>Viridiplantae</taxon>
        <taxon>Streptophyta</taxon>
        <taxon>Embryophyta</taxon>
        <taxon>Tracheophyta</taxon>
        <taxon>Spermatophyta</taxon>
        <taxon>Magnoliopsida</taxon>
        <taxon>Liliopsida</taxon>
        <taxon>Poales</taxon>
        <taxon>Poaceae</taxon>
        <taxon>BOP clade</taxon>
        <taxon>Oryzoideae</taxon>
        <taxon>Oryzeae</taxon>
        <taxon>Oryzinae</taxon>
        <taxon>Oryza</taxon>
        <taxon>Oryza sativa</taxon>
    </lineage>
</organism>
<sequence length="341" mass="38694">MEEHDYDSNSNPPLMSTYKHLFVEQHRLDMDMGAIDVDECELPVIDLAGLMEAEQVCRADMVRAASEWGFFQVTNHGVPQALLRELHDAQVAVFRRPFQEKVTERLLGFSPESYRWGTPTAKCLEQLSWSEAYHIPMTTPRPSTSIRARAVIEEVSRAMYELAQKLAEILMRGLPGAGEGETMVTTREETCFLRLNRYPPCAMAMGGFGLCPHTDSDLLTIVHQQQDTVGGLQLLKGGRWVAVKPSPSTLIVNVGDLLQAWSNDVYKSVEHRVMANATLERFSMAFFLCPSYHTLIIPSSSHVHDDDAHYRSFTFGEYRKQIMEDVRSTGRKIGLHRFRTR</sequence>
<gene>
    <name evidence="5" type="primary">GA2OX5</name>
    <name evidence="9" type="ordered locus">Os07g0103500</name>
    <name evidence="6" type="ordered locus">LOC_Os07g01340</name>
    <name evidence="8" type="ORF">P0446F04.116</name>
</gene>
<keyword id="KW-0963">Cytoplasm</keyword>
<keyword id="KW-0223">Dioxygenase</keyword>
<keyword id="KW-0408">Iron</keyword>
<keyword id="KW-0479">Metal-binding</keyword>
<keyword id="KW-0539">Nucleus</keyword>
<keyword id="KW-0560">Oxidoreductase</keyword>
<keyword id="KW-1185">Reference proteome</keyword>
<feature type="chain" id="PRO_0000445476" description="Gibberellin 2-beta-dioxygenase 5">
    <location>
        <begin position="1"/>
        <end position="341"/>
    </location>
</feature>
<feature type="domain" description="Fe2OG dioxygenase" evidence="2">
    <location>
        <begin position="187"/>
        <end position="290"/>
    </location>
</feature>
<feature type="binding site" evidence="1">
    <location>
        <position position="198"/>
    </location>
    <ligand>
        <name>2-oxoglutarate</name>
        <dbReference type="ChEBI" id="CHEBI:16810"/>
    </ligand>
</feature>
<feature type="binding site" evidence="2">
    <location>
        <position position="213"/>
    </location>
    <ligand>
        <name>Fe cation</name>
        <dbReference type="ChEBI" id="CHEBI:24875"/>
    </ligand>
</feature>
<feature type="binding site" evidence="2">
    <location>
        <position position="215"/>
    </location>
    <ligand>
        <name>Fe cation</name>
        <dbReference type="ChEBI" id="CHEBI:24875"/>
    </ligand>
</feature>
<feature type="binding site" evidence="2">
    <location>
        <position position="271"/>
    </location>
    <ligand>
        <name>Fe cation</name>
        <dbReference type="ChEBI" id="CHEBI:24875"/>
    </ligand>
</feature>
<feature type="binding site" evidence="2">
    <location>
        <position position="281"/>
    </location>
    <ligand>
        <name>2-oxoglutarate</name>
        <dbReference type="ChEBI" id="CHEBI:16810"/>
    </ligand>
</feature>
<feature type="binding site" evidence="1">
    <location>
        <position position="283"/>
    </location>
    <ligand>
        <name>2-oxoglutarate</name>
        <dbReference type="ChEBI" id="CHEBI:16810"/>
    </ligand>
</feature>